<feature type="chain" id="PRO_0000236138" description="DNA replication and repair protein RecF">
    <location>
        <begin position="1"/>
        <end position="364"/>
    </location>
</feature>
<feature type="binding site" evidence="1">
    <location>
        <begin position="33"/>
        <end position="40"/>
    </location>
    <ligand>
        <name>ATP</name>
        <dbReference type="ChEBI" id="CHEBI:30616"/>
    </ligand>
</feature>
<comment type="function">
    <text evidence="1">The RecF protein is involved in DNA metabolism; it is required for DNA replication and normal SOS inducibility. RecF binds preferentially to single-stranded, linear DNA. It also seems to bind ATP.</text>
</comment>
<comment type="subcellular location">
    <subcellularLocation>
        <location evidence="1">Cytoplasm</location>
    </subcellularLocation>
</comment>
<comment type="similarity">
    <text evidence="1">Belongs to the RecF family.</text>
</comment>
<comment type="sequence caution" evidence="2">
    <conflict type="erroneous initiation">
        <sequence resource="EMBL-CDS" id="AAY60886"/>
    </conflict>
</comment>
<name>RECF_RICFE</name>
<proteinExistence type="inferred from homology"/>
<dbReference type="EMBL" id="CP000053">
    <property type="protein sequence ID" value="AAY60886.1"/>
    <property type="status" value="ALT_INIT"/>
    <property type="molecule type" value="Genomic_DNA"/>
</dbReference>
<dbReference type="SMR" id="Q4UNG8"/>
<dbReference type="STRING" id="315456.RF_0035"/>
<dbReference type="KEGG" id="rfe:RF_0035"/>
<dbReference type="eggNOG" id="COG1195">
    <property type="taxonomic scope" value="Bacteria"/>
</dbReference>
<dbReference type="HOGENOM" id="CLU_040267_2_0_5"/>
<dbReference type="OrthoDB" id="9803889at2"/>
<dbReference type="Proteomes" id="UP000008548">
    <property type="component" value="Chromosome"/>
</dbReference>
<dbReference type="GO" id="GO:0005737">
    <property type="term" value="C:cytoplasm"/>
    <property type="evidence" value="ECO:0007669"/>
    <property type="project" value="UniProtKB-SubCell"/>
</dbReference>
<dbReference type="GO" id="GO:0005524">
    <property type="term" value="F:ATP binding"/>
    <property type="evidence" value="ECO:0007669"/>
    <property type="project" value="UniProtKB-UniRule"/>
</dbReference>
<dbReference type="GO" id="GO:0003697">
    <property type="term" value="F:single-stranded DNA binding"/>
    <property type="evidence" value="ECO:0007669"/>
    <property type="project" value="UniProtKB-UniRule"/>
</dbReference>
<dbReference type="GO" id="GO:0006260">
    <property type="term" value="P:DNA replication"/>
    <property type="evidence" value="ECO:0007669"/>
    <property type="project" value="UniProtKB-UniRule"/>
</dbReference>
<dbReference type="GO" id="GO:0000731">
    <property type="term" value="P:DNA synthesis involved in DNA repair"/>
    <property type="evidence" value="ECO:0007669"/>
    <property type="project" value="TreeGrafter"/>
</dbReference>
<dbReference type="GO" id="GO:0006302">
    <property type="term" value="P:double-strand break repair"/>
    <property type="evidence" value="ECO:0007669"/>
    <property type="project" value="TreeGrafter"/>
</dbReference>
<dbReference type="GO" id="GO:0009432">
    <property type="term" value="P:SOS response"/>
    <property type="evidence" value="ECO:0007669"/>
    <property type="project" value="UniProtKB-UniRule"/>
</dbReference>
<dbReference type="Gene3D" id="3.40.50.300">
    <property type="entry name" value="P-loop containing nucleotide triphosphate hydrolases"/>
    <property type="match status" value="1"/>
</dbReference>
<dbReference type="Gene3D" id="1.20.1050.90">
    <property type="entry name" value="RecF/RecN/SMC, N-terminal domain"/>
    <property type="match status" value="1"/>
</dbReference>
<dbReference type="HAMAP" id="MF_00365">
    <property type="entry name" value="RecF"/>
    <property type="match status" value="1"/>
</dbReference>
<dbReference type="InterPro" id="IPR001238">
    <property type="entry name" value="DNA-binding_RecF"/>
</dbReference>
<dbReference type="InterPro" id="IPR018078">
    <property type="entry name" value="DNA-binding_RecF_CS"/>
</dbReference>
<dbReference type="InterPro" id="IPR027417">
    <property type="entry name" value="P-loop_NTPase"/>
</dbReference>
<dbReference type="InterPro" id="IPR003395">
    <property type="entry name" value="RecF/RecN/SMC_N"/>
</dbReference>
<dbReference type="InterPro" id="IPR042174">
    <property type="entry name" value="RecF_2"/>
</dbReference>
<dbReference type="NCBIfam" id="TIGR00611">
    <property type="entry name" value="recf"/>
    <property type="match status" value="1"/>
</dbReference>
<dbReference type="PANTHER" id="PTHR32182">
    <property type="entry name" value="DNA REPLICATION AND REPAIR PROTEIN RECF"/>
    <property type="match status" value="1"/>
</dbReference>
<dbReference type="PANTHER" id="PTHR32182:SF0">
    <property type="entry name" value="DNA REPLICATION AND REPAIR PROTEIN RECF"/>
    <property type="match status" value="1"/>
</dbReference>
<dbReference type="Pfam" id="PF02463">
    <property type="entry name" value="SMC_N"/>
    <property type="match status" value="1"/>
</dbReference>
<dbReference type="SUPFAM" id="SSF52540">
    <property type="entry name" value="P-loop containing nucleoside triphosphate hydrolases"/>
    <property type="match status" value="1"/>
</dbReference>
<dbReference type="PROSITE" id="PS00617">
    <property type="entry name" value="RECF_1"/>
    <property type="match status" value="1"/>
</dbReference>
<dbReference type="PROSITE" id="PS00618">
    <property type="entry name" value="RECF_2"/>
    <property type="match status" value="1"/>
</dbReference>
<keyword id="KW-0067">ATP-binding</keyword>
<keyword id="KW-0963">Cytoplasm</keyword>
<keyword id="KW-0227">DNA damage</keyword>
<keyword id="KW-0234">DNA repair</keyword>
<keyword id="KW-0235">DNA replication</keyword>
<keyword id="KW-0238">DNA-binding</keyword>
<keyword id="KW-0547">Nucleotide-binding</keyword>
<keyword id="KW-0742">SOS response</keyword>
<reference key="1">
    <citation type="journal article" date="2005" name="PLoS Biol.">
        <title>The genome sequence of Rickettsia felis identifies the first putative conjugative plasmid in an obligate intracellular parasite.</title>
        <authorList>
            <person name="Ogata H."/>
            <person name="Renesto P."/>
            <person name="Audic S."/>
            <person name="Robert C."/>
            <person name="Blanc G."/>
            <person name="Fournier P.-E."/>
            <person name="Parinello H."/>
            <person name="Claverie J.-M."/>
            <person name="Raoult D."/>
        </authorList>
    </citation>
    <scope>NUCLEOTIDE SEQUENCE [LARGE SCALE GENOMIC DNA]</scope>
    <source>
        <strain>ATCC VR-1525 / URRWXCal2</strain>
    </source>
</reference>
<accession>Q4UNG8</accession>
<evidence type="ECO:0000255" key="1">
    <source>
        <dbReference type="HAMAP-Rule" id="MF_00365"/>
    </source>
</evidence>
<evidence type="ECO:0000305" key="2"/>
<organism>
    <name type="scientific">Rickettsia felis (strain ATCC VR-1525 / URRWXCal2)</name>
    <name type="common">Rickettsia azadi</name>
    <dbReference type="NCBI Taxonomy" id="315456"/>
    <lineage>
        <taxon>Bacteria</taxon>
        <taxon>Pseudomonadati</taxon>
        <taxon>Pseudomonadota</taxon>
        <taxon>Alphaproteobacteria</taxon>
        <taxon>Rickettsiales</taxon>
        <taxon>Rickettsiaceae</taxon>
        <taxon>Rickettsieae</taxon>
        <taxon>Rickettsia</taxon>
        <taxon>spotted fever group</taxon>
    </lineage>
</organism>
<gene>
    <name evidence="1" type="primary">recF</name>
    <name type="ordered locus">RF_0035</name>
</gene>
<sequence length="364" mass="41857">MKNIFLHSLTLENYRNFKNLELKTDNTPIILIGENGSGKTNILEAISLFYPGRGLRSAKLADICKASEDQCLVKALLQSKLGLAEFTTQFKRSSNRRITEYNESKIANNELSKFTSMVWLTPQMEGIFTSGSSDRRKFLDRIVYNFDSKHAELVSKYEYYMYERNKILAEDIRDDNWLKIIEEKMADMSSHIANNRLKTLEFMQQAIDELENEFPKADLSIDGIVEQKILDGKENIVNFITAELYQTRSKDKLLGRTSFGVHKSDFLVKHQKKNILAKFCSTGEQKAILIAIILAEMNYAIKLTKIAPILLLDEVFVHLDDKRRGYLIEFFTGLNMQLWVTATDLEGIENFANKAQLIKLPIIL</sequence>
<protein>
    <recommendedName>
        <fullName evidence="1">DNA replication and repair protein RecF</fullName>
    </recommendedName>
</protein>